<keyword id="KW-0227">DNA damage</keyword>
<keyword id="KW-0233">DNA recombination</keyword>
<keyword id="KW-0234">DNA repair</keyword>
<keyword id="KW-0479">Metal-binding</keyword>
<keyword id="KW-0862">Zinc</keyword>
<keyword id="KW-0863">Zinc-finger</keyword>
<feature type="chain" id="PRO_1000057150" description="Recombination protein RecR">
    <location>
        <begin position="1"/>
        <end position="200"/>
    </location>
</feature>
<feature type="domain" description="Toprim" evidence="1">
    <location>
        <begin position="82"/>
        <end position="177"/>
    </location>
</feature>
<feature type="zinc finger region" description="C4-type" evidence="1">
    <location>
        <begin position="59"/>
        <end position="74"/>
    </location>
</feature>
<protein>
    <recommendedName>
        <fullName evidence="1">Recombination protein RecR</fullName>
    </recommendedName>
</protein>
<gene>
    <name evidence="1" type="primary">recR</name>
    <name type="ordered locus">BURPS668_2204</name>
</gene>
<comment type="function">
    <text evidence="1">May play a role in DNA repair. It seems to be involved in an RecBC-independent recombinational process of DNA repair. It may act with RecF and RecO.</text>
</comment>
<comment type="similarity">
    <text evidence="1">Belongs to the RecR family.</text>
</comment>
<evidence type="ECO:0000255" key="1">
    <source>
        <dbReference type="HAMAP-Rule" id="MF_00017"/>
    </source>
</evidence>
<dbReference type="EMBL" id="CP000570">
    <property type="protein sequence ID" value="ABN82984.1"/>
    <property type="molecule type" value="Genomic_DNA"/>
</dbReference>
<dbReference type="RefSeq" id="WP_004521324.1">
    <property type="nucleotide sequence ID" value="NC_009074.1"/>
</dbReference>
<dbReference type="SMR" id="A3NA68"/>
<dbReference type="KEGG" id="bpd:BURPS668_2204"/>
<dbReference type="HOGENOM" id="CLU_060739_1_2_4"/>
<dbReference type="GO" id="GO:0003677">
    <property type="term" value="F:DNA binding"/>
    <property type="evidence" value="ECO:0007669"/>
    <property type="project" value="UniProtKB-UniRule"/>
</dbReference>
<dbReference type="GO" id="GO:0008270">
    <property type="term" value="F:zinc ion binding"/>
    <property type="evidence" value="ECO:0007669"/>
    <property type="project" value="UniProtKB-KW"/>
</dbReference>
<dbReference type="GO" id="GO:0006310">
    <property type="term" value="P:DNA recombination"/>
    <property type="evidence" value="ECO:0007669"/>
    <property type="project" value="UniProtKB-UniRule"/>
</dbReference>
<dbReference type="GO" id="GO:0006281">
    <property type="term" value="P:DNA repair"/>
    <property type="evidence" value="ECO:0007669"/>
    <property type="project" value="UniProtKB-UniRule"/>
</dbReference>
<dbReference type="CDD" id="cd01025">
    <property type="entry name" value="TOPRIM_recR"/>
    <property type="match status" value="1"/>
</dbReference>
<dbReference type="Gene3D" id="3.30.60.80">
    <property type="match status" value="1"/>
</dbReference>
<dbReference type="Gene3D" id="3.40.1360.10">
    <property type="match status" value="1"/>
</dbReference>
<dbReference type="Gene3D" id="6.10.250.240">
    <property type="match status" value="1"/>
</dbReference>
<dbReference type="Gene3D" id="1.10.8.420">
    <property type="entry name" value="RecR Domain 1"/>
    <property type="match status" value="1"/>
</dbReference>
<dbReference type="HAMAP" id="MF_00017">
    <property type="entry name" value="RecR"/>
    <property type="match status" value="1"/>
</dbReference>
<dbReference type="InterPro" id="IPR000093">
    <property type="entry name" value="DNA_Rcmb_RecR"/>
</dbReference>
<dbReference type="InterPro" id="IPR023627">
    <property type="entry name" value="Rcmb_RecR"/>
</dbReference>
<dbReference type="InterPro" id="IPR015967">
    <property type="entry name" value="Rcmb_RecR_Znf"/>
</dbReference>
<dbReference type="InterPro" id="IPR006171">
    <property type="entry name" value="TOPRIM_dom"/>
</dbReference>
<dbReference type="InterPro" id="IPR034137">
    <property type="entry name" value="TOPRIM_RecR"/>
</dbReference>
<dbReference type="NCBIfam" id="TIGR00615">
    <property type="entry name" value="recR"/>
    <property type="match status" value="1"/>
</dbReference>
<dbReference type="PANTHER" id="PTHR30446">
    <property type="entry name" value="RECOMBINATION PROTEIN RECR"/>
    <property type="match status" value="1"/>
</dbReference>
<dbReference type="PANTHER" id="PTHR30446:SF0">
    <property type="entry name" value="RECOMBINATION PROTEIN RECR"/>
    <property type="match status" value="1"/>
</dbReference>
<dbReference type="Pfam" id="PF21175">
    <property type="entry name" value="RecR_C"/>
    <property type="match status" value="1"/>
</dbReference>
<dbReference type="Pfam" id="PF21176">
    <property type="entry name" value="RecR_HhH"/>
    <property type="match status" value="1"/>
</dbReference>
<dbReference type="Pfam" id="PF02132">
    <property type="entry name" value="RecR_ZnF"/>
    <property type="match status" value="1"/>
</dbReference>
<dbReference type="Pfam" id="PF13662">
    <property type="entry name" value="Toprim_4"/>
    <property type="match status" value="1"/>
</dbReference>
<dbReference type="SMART" id="SM00493">
    <property type="entry name" value="TOPRIM"/>
    <property type="match status" value="1"/>
</dbReference>
<dbReference type="SUPFAM" id="SSF111304">
    <property type="entry name" value="Recombination protein RecR"/>
    <property type="match status" value="1"/>
</dbReference>
<dbReference type="PROSITE" id="PS01300">
    <property type="entry name" value="RECR"/>
    <property type="match status" value="1"/>
</dbReference>
<dbReference type="PROSITE" id="PS50880">
    <property type="entry name" value="TOPRIM"/>
    <property type="match status" value="1"/>
</dbReference>
<sequence>MSIKPPSALSELVEALRALPGVGPKSAQRIAYHLMQHDREGAERLGRSLLFATEHLRHCEKCNTFTEAQVCEVCSDPERDPALLCVVETPADQIMLEQTMTYRGLYFVLMGRLSPLDGIGPKEIHFDRLVRRASDGIVKEVVLATNFTNEGEATAHYLGQTLKARGLAVTRLARGVPVGGELEYVDAGTIARAMLDRRTL</sequence>
<reference key="1">
    <citation type="journal article" date="2010" name="Genome Biol. Evol.">
        <title>Continuing evolution of Burkholderia mallei through genome reduction and large-scale rearrangements.</title>
        <authorList>
            <person name="Losada L."/>
            <person name="Ronning C.M."/>
            <person name="DeShazer D."/>
            <person name="Woods D."/>
            <person name="Fedorova N."/>
            <person name="Kim H.S."/>
            <person name="Shabalina S.A."/>
            <person name="Pearson T.R."/>
            <person name="Brinkac L."/>
            <person name="Tan P."/>
            <person name="Nandi T."/>
            <person name="Crabtree J."/>
            <person name="Badger J."/>
            <person name="Beckstrom-Sternberg S."/>
            <person name="Saqib M."/>
            <person name="Schutzer S.E."/>
            <person name="Keim P."/>
            <person name="Nierman W.C."/>
        </authorList>
    </citation>
    <scope>NUCLEOTIDE SEQUENCE [LARGE SCALE GENOMIC DNA]</scope>
    <source>
        <strain>668</strain>
    </source>
</reference>
<organism>
    <name type="scientific">Burkholderia pseudomallei (strain 668)</name>
    <dbReference type="NCBI Taxonomy" id="320373"/>
    <lineage>
        <taxon>Bacteria</taxon>
        <taxon>Pseudomonadati</taxon>
        <taxon>Pseudomonadota</taxon>
        <taxon>Betaproteobacteria</taxon>
        <taxon>Burkholderiales</taxon>
        <taxon>Burkholderiaceae</taxon>
        <taxon>Burkholderia</taxon>
        <taxon>pseudomallei group</taxon>
    </lineage>
</organism>
<proteinExistence type="inferred from homology"/>
<accession>A3NA68</accession>
<name>RECR_BURP6</name>